<reference key="1">
    <citation type="journal article" date="2004" name="Science">
        <title>The 1.2-megabase genome sequence of Mimivirus.</title>
        <authorList>
            <person name="Raoult D."/>
            <person name="Audic S."/>
            <person name="Robert C."/>
            <person name="Abergel C."/>
            <person name="Renesto P."/>
            <person name="Ogata H."/>
            <person name="La Scola B."/>
            <person name="Susan M."/>
            <person name="Claverie J.-M."/>
        </authorList>
    </citation>
    <scope>NUCLEOTIDE SEQUENCE [LARGE SCALE GENOMIC DNA]</scope>
    <source>
        <strain>Rowbotham-Bradford</strain>
    </source>
</reference>
<proteinExistence type="predicted"/>
<name>YL038_MIMIV</name>
<organism>
    <name type="scientific">Acanthamoeba polyphaga mimivirus</name>
    <name type="common">APMV</name>
    <dbReference type="NCBI Taxonomy" id="212035"/>
    <lineage>
        <taxon>Viruses</taxon>
        <taxon>Varidnaviria</taxon>
        <taxon>Bamfordvirae</taxon>
        <taxon>Nucleocytoviricota</taxon>
        <taxon>Megaviricetes</taxon>
        <taxon>Imitervirales</taxon>
        <taxon>Mimiviridae</taxon>
        <taxon>Megamimivirinae</taxon>
        <taxon>Mimivirus</taxon>
        <taxon>Mimivirus bradfordmassiliense</taxon>
    </lineage>
</organism>
<dbReference type="EMBL" id="AY653733">
    <property type="protein sequence ID" value="AAV50313.1"/>
    <property type="molecule type" value="Genomic_DNA"/>
</dbReference>
<dbReference type="SMR" id="Q5UPB2"/>
<dbReference type="KEGG" id="vg:9924620"/>
<dbReference type="Proteomes" id="UP000001134">
    <property type="component" value="Genome"/>
</dbReference>
<dbReference type="Gene3D" id="1.25.40.20">
    <property type="entry name" value="Ankyrin repeat-containing domain"/>
    <property type="match status" value="1"/>
</dbReference>
<dbReference type="InterPro" id="IPR002110">
    <property type="entry name" value="Ankyrin_rpt"/>
</dbReference>
<dbReference type="InterPro" id="IPR036770">
    <property type="entry name" value="Ankyrin_rpt-contain_sf"/>
</dbReference>
<dbReference type="Pfam" id="PF12796">
    <property type="entry name" value="Ank_2"/>
    <property type="match status" value="1"/>
</dbReference>
<dbReference type="SMART" id="SM00248">
    <property type="entry name" value="ANK"/>
    <property type="match status" value="1"/>
</dbReference>
<dbReference type="SUPFAM" id="SSF48403">
    <property type="entry name" value="Ankyrin repeat"/>
    <property type="match status" value="1"/>
</dbReference>
<dbReference type="PROSITE" id="PS50297">
    <property type="entry name" value="ANK_REP_REGION"/>
    <property type="match status" value="1"/>
</dbReference>
<dbReference type="PROSITE" id="PS50088">
    <property type="entry name" value="ANK_REPEAT"/>
    <property type="match status" value="1"/>
</dbReference>
<accession>Q5UPB2</accession>
<protein>
    <recommendedName>
        <fullName>Putative ankyrin repeat protein L38</fullName>
    </recommendedName>
</protein>
<keyword id="KW-0040">ANK repeat</keyword>
<keyword id="KW-1185">Reference proteome</keyword>
<feature type="chain" id="PRO_0000067138" description="Putative ankyrin repeat protein L38">
    <location>
        <begin position="1"/>
        <end position="189"/>
    </location>
</feature>
<feature type="repeat" description="ANK">
    <location>
        <begin position="108"/>
        <end position="137"/>
    </location>
</feature>
<gene>
    <name type="ordered locus">MIMI_L38</name>
</gene>
<organismHost>
    <name type="scientific">Acanthamoeba polyphaga</name>
    <name type="common">Amoeba</name>
    <dbReference type="NCBI Taxonomy" id="5757"/>
</organismHost>
<sequence length="189" mass="22390">MVTYISFIGESQFNFYFASKKFFRLTKYFRDPINSKKFENLIKQAIIRKLPHIVNYISMIIKNNKPEFNNKLFDNLGINEYFRQCVKHNIYNAIDYFVSKDINTVNEYGKTPLITAIKSGNCIMVKKLIDYGADFNKNKIYKLAFDHRHNDIFIFLIDKKIESDKTYNKIRNNFGSICNTNINELVESK</sequence>